<accession>A0A7L9EYL9</accession>
<gene>
    <name evidence="4" type="primary">xenF</name>
</gene>
<proteinExistence type="evidence at protein level"/>
<protein>
    <recommendedName>
        <fullName evidence="4">Hexane cyclase xenF</fullName>
        <ecNumber evidence="3">5.5.1.-</ecNumber>
    </recommendedName>
    <alternativeName>
        <fullName evidence="4">Xenoacremones biosynthesis cluster protein F</fullName>
    </alternativeName>
</protein>
<reference key="1">
    <citation type="journal article" date="2021" name="Acta Pharm. Sin. B (APSB)">
        <title>Tricarbocyclic core formation of tyrosine-decahydrofluorenes implies a three-enzyme cascade with XenF-mediated sigmatropic rearrangement as a prerequisite.</title>
        <authorList>
            <person name="Liu Z."/>
            <person name="Li W."/>
            <person name="Zhang P."/>
            <person name="Fan J."/>
            <person name="Zhang F."/>
            <person name="Wang C."/>
            <person name="Li S."/>
            <person name="Sun Y."/>
            <person name="Chen S."/>
            <person name="Yin W."/>
        </authorList>
    </citation>
    <scope>NUCLEOTIDE SEQUENCE [GENOMIC DNA]</scope>
    <scope>FUNCTION</scope>
    <scope>DISRUPTION PHENOTYPE</scope>
    <scope>CATALYTIC ACTIVITY</scope>
    <scope>PATHWAY</scope>
    <source>
        <strain>ML-31</strain>
    </source>
</reference>
<name>XENF_XENSI</name>
<keyword id="KW-0325">Glycoprotein</keyword>
<keyword id="KW-0413">Isomerase</keyword>
<keyword id="KW-0732">Signal</keyword>
<organism>
    <name type="scientific">Xenoacremonium sinensis</name>
    <name type="common">Endophyte fungus</name>
    <dbReference type="NCBI Taxonomy" id="2480843"/>
    <lineage>
        <taxon>Eukaryota</taxon>
        <taxon>Fungi</taxon>
        <taxon>Dikarya</taxon>
        <taxon>Ascomycota</taxon>
        <taxon>Pezizomycotina</taxon>
        <taxon>Sordariomycetes</taxon>
        <taxon>Hypocreomycetidae</taxon>
        <taxon>Hypocreales</taxon>
        <taxon>Nectriaceae</taxon>
        <taxon>Xenoacremonium</taxon>
    </lineage>
</organism>
<evidence type="ECO:0000255" key="1"/>
<evidence type="ECO:0000255" key="2">
    <source>
        <dbReference type="PROSITE-ProRule" id="PRU00498"/>
    </source>
</evidence>
<evidence type="ECO:0000269" key="3">
    <source>
    </source>
</evidence>
<evidence type="ECO:0000303" key="4">
    <source>
    </source>
</evidence>
<evidence type="ECO:0000305" key="5"/>
<sequence length="435" mass="48499">MSPAANMFRTLTLTALVSAVVSAYESQVPLNPQFPEYLNEEWDDSCSISKSTAYDVHDGPNTFSSSPSEDIHSVKISPHVNATNWEQWEFDGLSHTGLSGLLMAFSRDATYAFFGQGNLRVEFYITLGDGSIIQELDFISESYVIDCPDFTAGIWNSTDRSYSFYVTKDHQFARLKFDSWRVRGGFTMSSSTRPHLADGSPWTPDGGKPDATEVSPGLFYGLSMGGAEVDVDATLSSGKRITFKGRGGSTRLWATEGWLKLCDGWKVIRAWAGPYSIVYWDVLSRIDRGVRYVSGHLFYHDELLVGSRVGQPSDKADYVLFNDQFDGEMSGKYKDKNTGHHLEFASPARDKKWTFDVQHIVTQYEIGAGAGFGMSGFANRVVGGEVGGVQYEGKGQSEQTYWPEHIEEWKIWLVWGLGFLGRGKTYVMKLVGYVL</sequence>
<comment type="function">
    <text evidence="3">Hexane cyclase; part of the gene cluster that mediates the biosynthesis of xenoacremones such as xenoacremone A, a compound that shows inhibitory activity toward the PI3K/AKT signaling pathway and which has the ability to induce apoptosis of A549 lung cancer cells (PubMed:34900544). Within the pathway, cooperation of the hybrid PKS-NRPS xenE and the trans-acting enoyl reductase xenG is responsible for the formation of the reduced tyrosine-nonaketide derivative (PubMed:34900544). The alpha/beta hydrolase xenA then accelerates intramolecular nucleophilic attack to give a pyrrolidone derivative (PubMed:34900544). Subsequently, three enzymes, xenF, xenD, and xenC, coordinately participate in the conversion to xenoacremone B (PubMed:34900544). XenF catalyzes sigmatropic rearrangement to form an A-ring, which leads to an unusual intermediate with a hexane ring, which is required for the formation of the tricarbocyclic product (PubMed:34900544). Epoxidation catalyzed by xenD and the formation of the paracyclophane ether catalyzed by xenC initiate a spontaneous intramolecular Diels-Alder (IMDA) reaction to yield xenoacremone B (PubMed:34900544). Spontaneous hydration of xenoacremone B leads to the formation of xenoacremone A, which undergoes subsequent methylation to afford xenoacremone C (PubMed:34900544).</text>
</comment>
<comment type="pathway">
    <text evidence="3">Mycotoxin biosynthesis.</text>
</comment>
<comment type="disruption phenotype">
    <text evidence="3">Abolishes the production of xenoacremones A and B.</text>
</comment>
<comment type="similarity">
    <text evidence="5">Belongs to the Diels-Alderase family.</text>
</comment>
<dbReference type="EC" id="5.5.1.-" evidence="3"/>
<dbReference type="EMBL" id="MT876600">
    <property type="protein sequence ID" value="QOJ72664.1"/>
    <property type="molecule type" value="Genomic_DNA"/>
</dbReference>
<dbReference type="SMR" id="A0A7L9EYL9"/>
<dbReference type="GO" id="GO:0016853">
    <property type="term" value="F:isomerase activity"/>
    <property type="evidence" value="ECO:0007669"/>
    <property type="project" value="UniProtKB-KW"/>
</dbReference>
<dbReference type="InterPro" id="IPR054499">
    <property type="entry name" value="DA_C"/>
</dbReference>
<dbReference type="Pfam" id="PF22903">
    <property type="entry name" value="DA_C"/>
    <property type="match status" value="1"/>
</dbReference>
<dbReference type="Pfam" id="PF24137">
    <property type="entry name" value="DA_N"/>
    <property type="match status" value="1"/>
</dbReference>
<feature type="signal peptide" evidence="1">
    <location>
        <begin position="1"/>
        <end position="23"/>
    </location>
</feature>
<feature type="chain" id="PRO_5029786724" description="Hexane cyclase xenF" evidence="1">
    <location>
        <begin position="24"/>
        <end position="435"/>
    </location>
</feature>
<feature type="glycosylation site" description="N-linked (GlcNAc...) asparagine" evidence="2">
    <location>
        <position position="81"/>
    </location>
</feature>
<feature type="glycosylation site" description="N-linked (GlcNAc...) asparagine" evidence="2">
    <location>
        <position position="156"/>
    </location>
</feature>